<protein>
    <recommendedName>
        <fullName evidence="1">Cell division protein FtsZ 2</fullName>
    </recommendedName>
</protein>
<dbReference type="EMBL" id="L77117">
    <property type="protein sequence ID" value="AAB98617.1"/>
    <property type="molecule type" value="Genomic_DNA"/>
</dbReference>
<dbReference type="PIR" id="F64377">
    <property type="entry name" value="F64377"/>
</dbReference>
<dbReference type="SMR" id="Q58039"/>
<dbReference type="FunCoup" id="Q58039">
    <property type="interactions" value="63"/>
</dbReference>
<dbReference type="STRING" id="243232.MJ_0622"/>
<dbReference type="PaxDb" id="243232-MJ_0622"/>
<dbReference type="EnsemblBacteria" id="AAB98617">
    <property type="protein sequence ID" value="AAB98617"/>
    <property type="gene ID" value="MJ_0622"/>
</dbReference>
<dbReference type="KEGG" id="mja:MJ_0622"/>
<dbReference type="eggNOG" id="arCOG02201">
    <property type="taxonomic scope" value="Archaea"/>
</dbReference>
<dbReference type="HOGENOM" id="CLU_024865_0_1_2"/>
<dbReference type="InParanoid" id="Q58039"/>
<dbReference type="PhylomeDB" id="Q58039"/>
<dbReference type="Proteomes" id="UP000000805">
    <property type="component" value="Chromosome"/>
</dbReference>
<dbReference type="GO" id="GO:0032153">
    <property type="term" value="C:cell division site"/>
    <property type="evidence" value="ECO:0000318"/>
    <property type="project" value="GO_Central"/>
</dbReference>
<dbReference type="GO" id="GO:0005737">
    <property type="term" value="C:cytoplasm"/>
    <property type="evidence" value="ECO:0000318"/>
    <property type="project" value="GO_Central"/>
</dbReference>
<dbReference type="GO" id="GO:0005525">
    <property type="term" value="F:GTP binding"/>
    <property type="evidence" value="ECO:0000318"/>
    <property type="project" value="GO_Central"/>
</dbReference>
<dbReference type="GO" id="GO:0003924">
    <property type="term" value="F:GTPase activity"/>
    <property type="evidence" value="ECO:0000318"/>
    <property type="project" value="GO_Central"/>
</dbReference>
<dbReference type="GO" id="GO:0051301">
    <property type="term" value="P:cell division"/>
    <property type="evidence" value="ECO:0000318"/>
    <property type="project" value="GO_Central"/>
</dbReference>
<dbReference type="GO" id="GO:0043093">
    <property type="term" value="P:FtsZ-dependent cytokinesis"/>
    <property type="evidence" value="ECO:0007669"/>
    <property type="project" value="UniProtKB-UniRule"/>
</dbReference>
<dbReference type="GO" id="GO:0051258">
    <property type="term" value="P:protein polymerization"/>
    <property type="evidence" value="ECO:0007669"/>
    <property type="project" value="UniProtKB-UniRule"/>
</dbReference>
<dbReference type="CDD" id="cd02201">
    <property type="entry name" value="FtsZ_type1"/>
    <property type="match status" value="1"/>
</dbReference>
<dbReference type="FunFam" id="3.30.1330.20:FF:000008">
    <property type="entry name" value="Cell division protein FtsZ"/>
    <property type="match status" value="1"/>
</dbReference>
<dbReference type="FunFam" id="3.40.50.1440:FF:000023">
    <property type="entry name" value="Cell division protein FtsZ"/>
    <property type="match status" value="1"/>
</dbReference>
<dbReference type="Gene3D" id="3.30.1330.20">
    <property type="entry name" value="Tubulin/FtsZ, C-terminal domain"/>
    <property type="match status" value="1"/>
</dbReference>
<dbReference type="Gene3D" id="3.40.50.1440">
    <property type="entry name" value="Tubulin/FtsZ, GTPase domain"/>
    <property type="match status" value="1"/>
</dbReference>
<dbReference type="HAMAP" id="MF_00909">
    <property type="entry name" value="FtsZ"/>
    <property type="match status" value="1"/>
</dbReference>
<dbReference type="InterPro" id="IPR000158">
    <property type="entry name" value="Cell_div_FtsZ"/>
</dbReference>
<dbReference type="InterPro" id="IPR020805">
    <property type="entry name" value="Cell_div_FtsZ_CS"/>
</dbReference>
<dbReference type="InterPro" id="IPR045061">
    <property type="entry name" value="FtsZ/CetZ"/>
</dbReference>
<dbReference type="InterPro" id="IPR024757">
    <property type="entry name" value="FtsZ_C"/>
</dbReference>
<dbReference type="InterPro" id="IPR008280">
    <property type="entry name" value="Tub_FtsZ_C"/>
</dbReference>
<dbReference type="InterPro" id="IPR037103">
    <property type="entry name" value="Tubulin/FtsZ-like_C"/>
</dbReference>
<dbReference type="InterPro" id="IPR018316">
    <property type="entry name" value="Tubulin/FtsZ_2-layer-sand-dom"/>
</dbReference>
<dbReference type="InterPro" id="IPR036525">
    <property type="entry name" value="Tubulin/FtsZ_GTPase_sf"/>
</dbReference>
<dbReference type="InterPro" id="IPR003008">
    <property type="entry name" value="Tubulin_FtsZ_GTPase"/>
</dbReference>
<dbReference type="NCBIfam" id="TIGR00065">
    <property type="entry name" value="ftsZ"/>
    <property type="match status" value="1"/>
</dbReference>
<dbReference type="PANTHER" id="PTHR30314:SF9">
    <property type="entry name" value="CELL DIVISION PROTEIN FTSZ 2"/>
    <property type="match status" value="1"/>
</dbReference>
<dbReference type="PANTHER" id="PTHR30314">
    <property type="entry name" value="CELL DIVISION PROTEIN FTSZ-RELATED"/>
    <property type="match status" value="1"/>
</dbReference>
<dbReference type="Pfam" id="PF12327">
    <property type="entry name" value="FtsZ_C"/>
    <property type="match status" value="1"/>
</dbReference>
<dbReference type="Pfam" id="PF00091">
    <property type="entry name" value="Tubulin"/>
    <property type="match status" value="1"/>
</dbReference>
<dbReference type="PRINTS" id="PR00423">
    <property type="entry name" value="CELLDVISFTSZ"/>
</dbReference>
<dbReference type="SMART" id="SM00864">
    <property type="entry name" value="Tubulin"/>
    <property type="match status" value="1"/>
</dbReference>
<dbReference type="SMART" id="SM00865">
    <property type="entry name" value="Tubulin_C"/>
    <property type="match status" value="1"/>
</dbReference>
<dbReference type="SUPFAM" id="SSF55307">
    <property type="entry name" value="Tubulin C-terminal domain-like"/>
    <property type="match status" value="1"/>
</dbReference>
<dbReference type="SUPFAM" id="SSF52490">
    <property type="entry name" value="Tubulin nucleotide-binding domain-like"/>
    <property type="match status" value="1"/>
</dbReference>
<dbReference type="PROSITE" id="PS01134">
    <property type="entry name" value="FTSZ_1"/>
    <property type="match status" value="1"/>
</dbReference>
<dbReference type="PROSITE" id="PS01135">
    <property type="entry name" value="FTSZ_2"/>
    <property type="match status" value="1"/>
</dbReference>
<gene>
    <name evidence="1" type="primary">ftsZ2</name>
    <name type="ordered locus">MJ0622</name>
</gene>
<keyword id="KW-0131">Cell cycle</keyword>
<keyword id="KW-0132">Cell division</keyword>
<keyword id="KW-0963">Cytoplasm</keyword>
<keyword id="KW-0342">GTP-binding</keyword>
<keyword id="KW-0547">Nucleotide-binding</keyword>
<keyword id="KW-1185">Reference proteome</keyword>
<keyword id="KW-0717">Septation</keyword>
<feature type="chain" id="PRO_0000114402" description="Cell division protein FtsZ 2">
    <location>
        <begin position="1"/>
        <end position="380"/>
    </location>
</feature>
<feature type="binding site" evidence="1">
    <location>
        <begin position="47"/>
        <end position="51"/>
    </location>
    <ligand>
        <name>GTP</name>
        <dbReference type="ChEBI" id="CHEBI:37565"/>
    </ligand>
</feature>
<feature type="binding site" evidence="1">
    <location>
        <begin position="134"/>
        <end position="136"/>
    </location>
    <ligand>
        <name>GTP</name>
        <dbReference type="ChEBI" id="CHEBI:37565"/>
    </ligand>
</feature>
<feature type="binding site" evidence="1">
    <location>
        <position position="165"/>
    </location>
    <ligand>
        <name>GTP</name>
        <dbReference type="ChEBI" id="CHEBI:37565"/>
    </ligand>
</feature>
<feature type="binding site" evidence="1">
    <location>
        <position position="168"/>
    </location>
    <ligand>
        <name>GTP</name>
        <dbReference type="ChEBI" id="CHEBI:37565"/>
    </ligand>
</feature>
<feature type="binding site" evidence="1">
    <location>
        <position position="211"/>
    </location>
    <ligand>
        <name>GTP</name>
        <dbReference type="ChEBI" id="CHEBI:37565"/>
    </ligand>
</feature>
<evidence type="ECO:0000255" key="1">
    <source>
        <dbReference type="HAMAP-Rule" id="MF_00909"/>
    </source>
</evidence>
<accession>Q58039</accession>
<proteinExistence type="inferred from homology"/>
<organism>
    <name type="scientific">Methanocaldococcus jannaschii (strain ATCC 43067 / DSM 2661 / JAL-1 / JCM 10045 / NBRC 100440)</name>
    <name type="common">Methanococcus jannaschii</name>
    <dbReference type="NCBI Taxonomy" id="243232"/>
    <lineage>
        <taxon>Archaea</taxon>
        <taxon>Methanobacteriati</taxon>
        <taxon>Methanobacteriota</taxon>
        <taxon>Methanomada group</taxon>
        <taxon>Methanococci</taxon>
        <taxon>Methanococcales</taxon>
        <taxon>Methanocaldococcaceae</taxon>
        <taxon>Methanocaldococcus</taxon>
    </lineage>
</organism>
<reference key="1">
    <citation type="journal article" date="1996" name="Science">
        <title>Complete genome sequence of the methanogenic archaeon, Methanococcus jannaschii.</title>
        <authorList>
            <person name="Bult C.J."/>
            <person name="White O."/>
            <person name="Olsen G.J."/>
            <person name="Zhou L."/>
            <person name="Fleischmann R.D."/>
            <person name="Sutton G.G."/>
            <person name="Blake J.A."/>
            <person name="FitzGerald L.M."/>
            <person name="Clayton R.A."/>
            <person name="Gocayne J.D."/>
            <person name="Kerlavage A.R."/>
            <person name="Dougherty B.A."/>
            <person name="Tomb J.-F."/>
            <person name="Adams M.D."/>
            <person name="Reich C.I."/>
            <person name="Overbeek R."/>
            <person name="Kirkness E.F."/>
            <person name="Weinstock K.G."/>
            <person name="Merrick J.M."/>
            <person name="Glodek A."/>
            <person name="Scott J.L."/>
            <person name="Geoghagen N.S.M."/>
            <person name="Weidman J.F."/>
            <person name="Fuhrmann J.L."/>
            <person name="Nguyen D."/>
            <person name="Utterback T.R."/>
            <person name="Kelley J.M."/>
            <person name="Peterson J.D."/>
            <person name="Sadow P.W."/>
            <person name="Hanna M.C."/>
            <person name="Cotton M.D."/>
            <person name="Roberts K.M."/>
            <person name="Hurst M.A."/>
            <person name="Kaine B.P."/>
            <person name="Borodovsky M."/>
            <person name="Klenk H.-P."/>
            <person name="Fraser C.M."/>
            <person name="Smith H.O."/>
            <person name="Woese C.R."/>
            <person name="Venter J.C."/>
        </authorList>
    </citation>
    <scope>NUCLEOTIDE SEQUENCE [LARGE SCALE GENOMIC DNA]</scope>
    <source>
        <strain>ATCC 43067 / DSM 2661 / JAL-1 / JCM 10045 / NBRC 100440</strain>
    </source>
</reference>
<sequence length="380" mass="40658">MIYKFNIRNLRMIIMKLVKDALSRSDTTRYLKDEFGEARIVVVGCGGAGNNTINRLMEIGIQGAETIAINTDKQHLEVIQADKKILIGATLTRGLGAGGYPEIGRKAAEMAKNILEEQLKGADLVFVTAGMGGGTGTGSAPVVAEVAKENGAIVVGVVTYPFKIERARMKKADEGIARMSEVCDTVIIIDNNKLLDLVPNLPINDAFKVADEIIAQAVKGITETIAVPSLINIDFADVKAVMSGGGVAMIGVGEVDSSDRGDRVQNVVRETLSCPLLDVDYRGAKGALIHITGGPDLTLKEANDIGEGITKELDPEANVIWGARIDPEMEGCIRVMAIITGVKSPNIVGKDTKPKRIIPKVSKEQSQRKERKIGGIDFIV</sequence>
<comment type="function">
    <text evidence="1">Essential cell division protein that forms a contractile ring structure (Z ring) at the future cell division site. The regulation of the ring assembly controls the timing and the location of cell division. One of the functions of the FtsZ ring is to recruit other cell division proteins to the septum to produce a new cell wall between the dividing cells. Binds GTP and shows GTPase activity.</text>
</comment>
<comment type="subunit">
    <text evidence="1">Homodimer. Polymerizes to form a dynamic ring structure in a strictly GTP-dependent manner. Interacts directly with several other division proteins.</text>
</comment>
<comment type="subcellular location">
    <subcellularLocation>
        <location evidence="1">Cytoplasm</location>
    </subcellularLocation>
    <text evidence="1">Assembles at midcell at the inner surface of the cytoplasmic membrane.</text>
</comment>
<comment type="similarity">
    <text evidence="1">Belongs to the FtsZ family.</text>
</comment>
<name>FTSZ2_METJA</name>